<organism>
    <name type="scientific">Homo sapiens</name>
    <name type="common">Human</name>
    <dbReference type="NCBI Taxonomy" id="9606"/>
    <lineage>
        <taxon>Eukaryota</taxon>
        <taxon>Metazoa</taxon>
        <taxon>Chordata</taxon>
        <taxon>Craniata</taxon>
        <taxon>Vertebrata</taxon>
        <taxon>Euteleostomi</taxon>
        <taxon>Mammalia</taxon>
        <taxon>Eutheria</taxon>
        <taxon>Euarchontoglires</taxon>
        <taxon>Primates</taxon>
        <taxon>Haplorrhini</taxon>
        <taxon>Catarrhini</taxon>
        <taxon>Hominidae</taxon>
        <taxon>Homo</taxon>
    </lineage>
</organism>
<feature type="signal peptide" evidence="2">
    <location>
        <begin position="1"/>
        <end position="50"/>
    </location>
</feature>
<feature type="chain" id="PRO_0000033172" description="VPS10 domain-containing receptor SorCS2">
    <location>
        <begin position="51"/>
        <end position="1159"/>
    </location>
</feature>
<feature type="chain" id="PRO_0000447469" description="SorCS2 122 kDa chain" evidence="12">
    <location>
        <begin position="70"/>
        <end position="1159"/>
    </location>
</feature>
<feature type="chain" id="PRO_0000447470" description="SorCS2 104 kDa chain" evidence="12">
    <location>
        <begin position="120"/>
        <end position="1030"/>
    </location>
</feature>
<feature type="chain" id="PRO_0000447471" description="SorCS2 18 kDa chain" evidence="12">
    <location>
        <begin position="1031"/>
        <end position="1159"/>
    </location>
</feature>
<feature type="topological domain" description="Extracellular" evidence="11">
    <location>
        <begin position="51"/>
        <end position="1078"/>
    </location>
</feature>
<feature type="transmembrane region" description="Helical" evidence="2">
    <location>
        <begin position="1079"/>
        <end position="1099"/>
    </location>
</feature>
<feature type="topological domain" description="Cytoplasmic" evidence="11">
    <location>
        <begin position="1100"/>
        <end position="1159"/>
    </location>
</feature>
<feature type="repeat" description="BNR 1">
    <location>
        <begin position="182"/>
        <end position="193"/>
    </location>
</feature>
<feature type="repeat" description="BNR 2">
    <location>
        <begin position="232"/>
        <end position="243"/>
    </location>
</feature>
<feature type="repeat" description="BNR 3">
    <location>
        <begin position="273"/>
        <end position="284"/>
    </location>
</feature>
<feature type="repeat" description="BNR 4">
    <location>
        <begin position="468"/>
        <end position="479"/>
    </location>
</feature>
<feature type="repeat" description="BNR 5">
    <location>
        <begin position="545"/>
        <end position="556"/>
    </location>
</feature>
<feature type="repeat" description="BNR 6">
    <location>
        <begin position="587"/>
        <end position="598"/>
    </location>
</feature>
<feature type="domain" description="PKD" evidence="3">
    <location>
        <begin position="786"/>
        <end position="876"/>
    </location>
</feature>
<feature type="region of interest" description="Disordered" evidence="4">
    <location>
        <begin position="1"/>
        <end position="36"/>
    </location>
</feature>
<feature type="region of interest" description="Disordered" evidence="4">
    <location>
        <begin position="48"/>
        <end position="111"/>
    </location>
</feature>
<feature type="compositionally biased region" description="Low complexity" evidence="4">
    <location>
        <begin position="12"/>
        <end position="21"/>
    </location>
</feature>
<feature type="compositionally biased region" description="Pro residues" evidence="4">
    <location>
        <begin position="93"/>
        <end position="103"/>
    </location>
</feature>
<feature type="site" description="Cleavage" evidence="7">
    <location>
        <begin position="69"/>
        <end position="70"/>
    </location>
</feature>
<feature type="site" description="Cleavage" evidence="7">
    <location>
        <begin position="119"/>
        <end position="120"/>
    </location>
</feature>
<feature type="site" description="Cleavage" evidence="7">
    <location>
        <begin position="1030"/>
        <end position="1031"/>
    </location>
</feature>
<feature type="glycosylation site" description="N-linked (GlcNAc...) asparagine" evidence="2">
    <location>
        <position position="158"/>
    </location>
</feature>
<feature type="glycosylation site" description="N-linked (GlcNAc...) asparagine" evidence="2">
    <location>
        <position position="328"/>
    </location>
</feature>
<feature type="glycosylation site" description="N-linked (GlcNAc...) asparagine" evidence="2">
    <location>
        <position position="362"/>
    </location>
</feature>
<feature type="glycosylation site" description="N-linked (GlcNAc...) asparagine" evidence="2">
    <location>
        <position position="600"/>
    </location>
</feature>
<feature type="glycosylation site" description="N-linked (GlcNAc...) asparagine" evidence="2">
    <location>
        <position position="830"/>
    </location>
</feature>
<feature type="glycosylation site" description="N-linked (GlcNAc...) asparagine" evidence="2">
    <location>
        <position position="891"/>
    </location>
</feature>
<feature type="glycosylation site" description="N-linked (GlcNAc...) asparagine" evidence="2">
    <location>
        <position position="902"/>
    </location>
</feature>
<feature type="disulfide bond" evidence="1">
    <location>
        <begin position="324"/>
        <end position="329"/>
    </location>
</feature>
<feature type="disulfide bond" evidence="1">
    <location>
        <begin position="494"/>
        <end position="499"/>
    </location>
</feature>
<feature type="disulfide bond" evidence="1">
    <location>
        <begin position="649"/>
        <end position="684"/>
    </location>
</feature>
<feature type="disulfide bond" evidence="1">
    <location>
        <begin position="667"/>
        <end position="699"/>
    </location>
</feature>
<feature type="disulfide bond" evidence="1">
    <location>
        <begin position="701"/>
        <end position="760"/>
    </location>
</feature>
<feature type="disulfide bond" evidence="1">
    <location>
        <begin position="708"/>
        <end position="725"/>
    </location>
</feature>
<feature type="disulfide bond" evidence="1">
    <location>
        <begin position="740"/>
        <end position="775"/>
    </location>
</feature>
<feature type="sequence variant" id="VAR_060109" description="In dbSNP:rs34058821.">
    <original>G</original>
    <variation>R</variation>
    <location>
        <position position="345"/>
    </location>
</feature>
<feature type="sequence variant" id="VAR_060110" description="In dbSNP:rs16840892.">
    <original>T</original>
    <variation>M</variation>
    <location>
        <position position="695"/>
    </location>
</feature>
<feature type="sequence variant" id="VAR_060111" description="In dbSNP:rs16840899.">
    <original>T</original>
    <variation>I</variation>
    <location>
        <position position="745"/>
    </location>
</feature>
<feature type="mutagenesis site" description="Decreased proteolytic processing; when associated with 116-A--A-119." evidence="7">
    <original>RVPR</original>
    <variation>AVPA</variation>
    <location>
        <begin position="66"/>
        <end position="69"/>
    </location>
</feature>
<feature type="mutagenesis site" description="Decreased proteolytic processing; when associated with 66-A--A-69." evidence="7">
    <original>RWER</original>
    <variation>AWEA</variation>
    <location>
        <begin position="116"/>
        <end position="119"/>
    </location>
</feature>
<feature type="mutagenesis site" description="Strongly increases generation of the 104 kDa chain." evidence="7">
    <original>T</original>
    <variation>R</variation>
    <location>
        <position position="1027"/>
    </location>
</feature>
<feature type="mutagenesis site" description="Abolishes generation of the 104 kDa chain." evidence="7">
    <original>RKR</original>
    <variation>AKA</variation>
    <location>
        <begin position="1028"/>
        <end position="1030"/>
    </location>
</feature>
<feature type="sequence conflict" description="In Ref. 3; BAA92567." evidence="11" ref="3">
    <original>S</original>
    <variation>P</variation>
    <location>
        <position position="716"/>
    </location>
</feature>
<feature type="strand" evidence="13">
    <location>
        <begin position="782"/>
        <end position="789"/>
    </location>
</feature>
<feature type="strand" evidence="13">
    <location>
        <begin position="800"/>
        <end position="808"/>
    </location>
</feature>
<feature type="strand" evidence="13">
    <location>
        <begin position="815"/>
        <end position="819"/>
    </location>
</feature>
<feature type="strand" evidence="13">
    <location>
        <begin position="821"/>
        <end position="823"/>
    </location>
</feature>
<feature type="strand" evidence="13">
    <location>
        <begin position="825"/>
        <end position="830"/>
    </location>
</feature>
<feature type="helix" evidence="13">
    <location>
        <begin position="831"/>
        <end position="834"/>
    </location>
</feature>
<feature type="strand" evidence="13">
    <location>
        <begin position="838"/>
        <end position="840"/>
    </location>
</feature>
<feature type="strand" evidence="13">
    <location>
        <begin position="848"/>
        <end position="855"/>
    </location>
</feature>
<feature type="strand" evidence="13">
    <location>
        <begin position="860"/>
        <end position="867"/>
    </location>
</feature>
<accession>Q96PQ0</accession>
<accession>Q9P2L7</accession>
<proteinExistence type="evidence at protein level"/>
<gene>
    <name type="primary">SORCS2</name>
    <name type="synonym">KIAA1329</name>
</gene>
<keyword id="KW-0002">3D-structure</keyword>
<keyword id="KW-1003">Cell membrane</keyword>
<keyword id="KW-0966">Cell projection</keyword>
<keyword id="KW-0968">Cytoplasmic vesicle</keyword>
<keyword id="KW-1015">Disulfide bond</keyword>
<keyword id="KW-0967">Endosome</keyword>
<keyword id="KW-0325">Glycoprotein</keyword>
<keyword id="KW-0472">Membrane</keyword>
<keyword id="KW-0628">Postsynaptic cell membrane</keyword>
<keyword id="KW-1267">Proteomics identification</keyword>
<keyword id="KW-1185">Reference proteome</keyword>
<keyword id="KW-0677">Repeat</keyword>
<keyword id="KW-0732">Signal</keyword>
<keyword id="KW-0770">Synapse</keyword>
<keyword id="KW-0771">Synaptosome</keyword>
<keyword id="KW-0812">Transmembrane</keyword>
<keyword id="KW-1133">Transmembrane helix</keyword>
<name>SORC2_HUMAN</name>
<reference key="1">
    <citation type="journal article" date="2005" name="Nature">
        <title>Generation and annotation of the DNA sequences of human chromosomes 2 and 4.</title>
        <authorList>
            <person name="Hillier L.W."/>
            <person name="Graves T.A."/>
            <person name="Fulton R.S."/>
            <person name="Fulton L.A."/>
            <person name="Pepin K.H."/>
            <person name="Minx P."/>
            <person name="Wagner-McPherson C."/>
            <person name="Layman D."/>
            <person name="Wylie K."/>
            <person name="Sekhon M."/>
            <person name="Becker M.C."/>
            <person name="Fewell G.A."/>
            <person name="Delehaunty K.D."/>
            <person name="Miner T.L."/>
            <person name="Nash W.E."/>
            <person name="Kremitzki C."/>
            <person name="Oddy L."/>
            <person name="Du H."/>
            <person name="Sun H."/>
            <person name="Bradshaw-Cordum H."/>
            <person name="Ali J."/>
            <person name="Carter J."/>
            <person name="Cordes M."/>
            <person name="Harris A."/>
            <person name="Isak A."/>
            <person name="van Brunt A."/>
            <person name="Nguyen C."/>
            <person name="Du F."/>
            <person name="Courtney L."/>
            <person name="Kalicki J."/>
            <person name="Ozersky P."/>
            <person name="Abbott S."/>
            <person name="Armstrong J."/>
            <person name="Belter E.A."/>
            <person name="Caruso L."/>
            <person name="Cedroni M."/>
            <person name="Cotton M."/>
            <person name="Davidson T."/>
            <person name="Desai A."/>
            <person name="Elliott G."/>
            <person name="Erb T."/>
            <person name="Fronick C."/>
            <person name="Gaige T."/>
            <person name="Haakenson W."/>
            <person name="Haglund K."/>
            <person name="Holmes A."/>
            <person name="Harkins R."/>
            <person name="Kim K."/>
            <person name="Kruchowski S.S."/>
            <person name="Strong C.M."/>
            <person name="Grewal N."/>
            <person name="Goyea E."/>
            <person name="Hou S."/>
            <person name="Levy A."/>
            <person name="Martinka S."/>
            <person name="Mead K."/>
            <person name="McLellan M.D."/>
            <person name="Meyer R."/>
            <person name="Randall-Maher J."/>
            <person name="Tomlinson C."/>
            <person name="Dauphin-Kohlberg S."/>
            <person name="Kozlowicz-Reilly A."/>
            <person name="Shah N."/>
            <person name="Swearengen-Shahid S."/>
            <person name="Snider J."/>
            <person name="Strong J.T."/>
            <person name="Thompson J."/>
            <person name="Yoakum M."/>
            <person name="Leonard S."/>
            <person name="Pearman C."/>
            <person name="Trani L."/>
            <person name="Radionenko M."/>
            <person name="Waligorski J.E."/>
            <person name="Wang C."/>
            <person name="Rock S.M."/>
            <person name="Tin-Wollam A.-M."/>
            <person name="Maupin R."/>
            <person name="Latreille P."/>
            <person name="Wendl M.C."/>
            <person name="Yang S.-P."/>
            <person name="Pohl C."/>
            <person name="Wallis J.W."/>
            <person name="Spieth J."/>
            <person name="Bieri T.A."/>
            <person name="Berkowicz N."/>
            <person name="Nelson J.O."/>
            <person name="Osborne J."/>
            <person name="Ding L."/>
            <person name="Meyer R."/>
            <person name="Sabo A."/>
            <person name="Shotland Y."/>
            <person name="Sinha P."/>
            <person name="Wohldmann P.E."/>
            <person name="Cook L.L."/>
            <person name="Hickenbotham M.T."/>
            <person name="Eldred J."/>
            <person name="Williams D."/>
            <person name="Jones T.A."/>
            <person name="She X."/>
            <person name="Ciccarelli F.D."/>
            <person name="Izaurralde E."/>
            <person name="Taylor J."/>
            <person name="Schmutz J."/>
            <person name="Myers R.M."/>
            <person name="Cox D.R."/>
            <person name="Huang X."/>
            <person name="McPherson J.D."/>
            <person name="Mardis E.R."/>
            <person name="Clifton S.W."/>
            <person name="Warren W.C."/>
            <person name="Chinwalla A.T."/>
            <person name="Eddy S.R."/>
            <person name="Marra M.A."/>
            <person name="Ovcharenko I."/>
            <person name="Furey T.S."/>
            <person name="Miller W."/>
            <person name="Eichler E.E."/>
            <person name="Bork P."/>
            <person name="Suyama M."/>
            <person name="Torrents D."/>
            <person name="Waterston R.H."/>
            <person name="Wilson R.K."/>
        </authorList>
    </citation>
    <scope>NUCLEOTIDE SEQUENCE [LARGE SCALE GENOMIC DNA]</scope>
</reference>
<reference key="2">
    <citation type="journal article" date="2001" name="Hum. Genet.">
        <title>The genes for the human VPS10 domain-containing receptors are large and contain many small exons.</title>
        <authorList>
            <person name="Hampe W."/>
            <person name="Rezgaoui M."/>
            <person name="Hermans-Borgmeyer I."/>
            <person name="Schaller H.C."/>
        </authorList>
    </citation>
    <scope>NUCLEOTIDE SEQUENCE [MRNA] OF 35-451</scope>
    <scope>TISSUE SPECIFICITY</scope>
</reference>
<reference key="3">
    <citation type="journal article" date="2000" name="DNA Res.">
        <title>Prediction of the coding sequences of unidentified human genes. XVI. The complete sequences of 150 new cDNA clones from brain which code for large proteins in vitro.</title>
        <authorList>
            <person name="Nagase T."/>
            <person name="Kikuno R."/>
            <person name="Ishikawa K."/>
            <person name="Hirosawa M."/>
            <person name="Ohara O."/>
        </authorList>
    </citation>
    <scope>NUCLEOTIDE SEQUENCE [LARGE SCALE MRNA] OF 253-1159</scope>
    <source>
        <tissue>Brain</tissue>
    </source>
</reference>
<reference key="4">
    <citation type="journal article" date="2011" name="Sci. Signal.">
        <title>Neuronal growth cone retraction relies on proneurotrophin receptor signaling through Rac.</title>
        <authorList>
            <person name="Deinhardt K."/>
            <person name="Kim T."/>
            <person name="Spellman D.S."/>
            <person name="Mains R.E."/>
            <person name="Eipper B.A."/>
            <person name="Neubert T.A."/>
            <person name="Chao M.V."/>
            <person name="Hempstead B.L."/>
        </authorList>
    </citation>
    <scope>FUNCTION</scope>
    <scope>INTERACTION WITH TRIO; NGF AND NGFR</scope>
    <scope>SUBUNIT</scope>
    <scope>SUBCELLULAR LOCATION</scope>
    <scope>TOPOLOGY</scope>
</reference>
<reference key="5">
    <citation type="journal article" date="2014" name="Neuron">
        <title>SorCS2 regulates dopaminergic wiring and is processed into an apoptotic two-chain receptor in peripheral glia.</title>
        <authorList>
            <person name="Glerup S."/>
            <person name="Olsen D."/>
            <person name="Vaegter C.B."/>
            <person name="Gustafsen C."/>
            <person name="Sjoegaard S.S."/>
            <person name="Hermey G."/>
            <person name="Kjolby M."/>
            <person name="Molgaard S."/>
            <person name="Ulrichsen M."/>
            <person name="Boggild S."/>
            <person name="Skeldal S."/>
            <person name="Fjorback A.N."/>
            <person name="Nyengaard J.R."/>
            <person name="Jacobsen J."/>
            <person name="Bender D."/>
            <person name="Bjarkam C.R."/>
            <person name="Soerensen E.S."/>
            <person name="Fuechtbauer E.M."/>
            <person name="Eichele G."/>
            <person name="Madsen P."/>
            <person name="Willnow T.E."/>
            <person name="Petersen C.M."/>
            <person name="Nykjaer A."/>
        </authorList>
    </citation>
    <scope>FUNCTION</scope>
    <scope>INTERACTION WITH NGFR; NGF; BDNF AND NTF3</scope>
    <scope>PROTEOLYTIC CLEAVAGE</scope>
    <scope>SUBCELLULAR LOCATION</scope>
    <scope>GLYCOSYLATION</scope>
    <scope>MUTAGENESIS OF 66-ARG--ARG-69; 116-ARG--ARG-119; THR-1027 AND 1028-LYS--ARG-1029</scope>
</reference>
<reference key="6">
    <citation type="journal article" date="2016" name="Mol. Psychiatry">
        <title>SorCS2 is required for BDNF-dependent plasticity in the hippocampus.</title>
        <authorList>
            <person name="Glerup S."/>
            <person name="Bolcho U."/>
            <person name="Moelgaard S."/>
            <person name="Boeggild S."/>
            <person name="Vaegter C.B."/>
            <person name="Smith A.H."/>
            <person name="Nieto-Gonzalez J.L."/>
            <person name="Ovesen P.L."/>
            <person name="Pedersen L.F."/>
            <person name="Fjorback A.N."/>
            <person name="Kjolby M."/>
            <person name="Login H."/>
            <person name="Holm M.M."/>
            <person name="Andersen O.M."/>
            <person name="Nyengaard J.R."/>
            <person name="Willnow T.E."/>
            <person name="Jensen K."/>
            <person name="Nykjaer A."/>
        </authorList>
    </citation>
    <scope>FUNCTION</scope>
</reference>
<reference key="7">
    <citation type="journal article" date="2017" name="JCI Insight">
        <title>SorCS2-mediated NR2A trafficking regulates motor deficits in Huntington's disease.</title>
        <authorList>
            <person name="Ma Q."/>
            <person name="Yang J."/>
            <person name="Milner T.A."/>
            <person name="Vonsattel J.G."/>
            <person name="Palko M.E."/>
            <person name="Tessarollo L."/>
            <person name="Hempstead B.L."/>
        </authorList>
    </citation>
    <scope>SUBCELLULAR LOCATION</scope>
    <scope>TISSUE SPECIFICITY</scope>
</reference>
<reference key="8">
    <citation type="journal article" date="2019" name="Cell Rep.">
        <title>SorCS2 Controls Functional Expression of Amino Acid Transporter EAAT3 and Protects Neurons from Oxidative Stress and Epilepsy-Induced Pathology.</title>
        <authorList>
            <person name="Malik A.R."/>
            <person name="Szydlowska K."/>
            <person name="Nizinska K."/>
            <person name="Asaro A."/>
            <person name="van Vliet E.A."/>
            <person name="Popp O."/>
            <person name="Dittmar G."/>
            <person name="Fritsche-Guenther R."/>
            <person name="Kirwan J.A."/>
            <person name="Nykjaer A."/>
            <person name="Lukasiuk K."/>
            <person name="Aronica E."/>
            <person name="Willnow T.E."/>
        </authorList>
    </citation>
    <scope>TISSUE SPECIFICITY</scope>
</reference>
<reference key="9">
    <citation type="submission" date="2004-11" db="PDB data bank">
        <title>Solution structure of the PKD domain from human VPS10 domain-containing receptor SORCS2.</title>
        <authorList>
            <consortium name="RIKEN structural genomics initiative (RSGI)"/>
        </authorList>
    </citation>
    <scope>STRUCTURE BY NMR OF 760-869</scope>
</reference>
<comment type="function">
    <text evidence="1 6 7 8">The heterodimer formed by NGFR and SORCS2 functions as receptor for the precursor forms of NGF (proNGF) and BDNF (proBDNF) (PubMed:22155786, PubMed:24908487). ProNGF and proBDNF binding both promote axon growth cone collapse (in vitro) (PubMed:22155786, PubMed:24908487). Plays a role in the regulation of dendritic spine density in hippocampus neurons (By similarity). Required for normal neurite branching and extension in response to BDNF (PubMed:27457814). Plays a role in BDNF-dependent hippocampal synaptic plasticity. Together with NGFR and NTRK2, is required both for BDNF-mediated synaptic long-term depression and long-term potentiation (PubMed:27457814). ProNGF binding promotes dissociation of TRIO from the heterodimer, which leads to inactivation of RAC1 and/or RAC2 and subsequent reorganization of the actin cytoskeleton (PubMed:22155786). Together with the retromer complex subunit VPS35, required for normal expression of GRIN2A at synapses and dendritic cell membranes. Required for normal expression of the amino acid transporter SLC1A1 at the cell membrane, and thereby contributes to protect cells against oxidative stress (By similarity).</text>
</comment>
<comment type="function">
    <molecule>SorCS2 122 kDa chain</molecule>
    <text evidence="7">Does not promote Schwann cell apoptosis in response to proBDNF.</text>
</comment>
<comment type="function">
    <text evidence="7">SorCS2 104 kDa chain and SorCS2 18 kDa chain together promote Schwann cell apoptosis in response to proBDNF.</text>
</comment>
<comment type="subunit">
    <text evidence="1 6 7">Homodimer (in vitro) (By similarity). Heterodimer with NGFR. The extracellular domains of the heterodimer bind the precursor form of NGF (proNGF) (PubMed:22155786, PubMed:24908487). Has much higher affinity for proNGF than for mature NGF (PubMed:24908487). Can also bind mature NGF and BDNF (By similarity). Each chain in the receptor dimer interacts (via extracellular domain) with an NGF dimer (in vitro) (By similarity). Interacts with the precursor forms of BDNF (proBDNF) and NTF3 (proNT3) (PubMed:24908487). The cytoplasmic region of the heterodimer formed by NGFR and SORCS2 binds TRIO. ProNGF binding mediates dissociation of TRIO from the receptor complex (PubMed:22155786). Interacts with SLC1A1. Interacts with VPS35. Interacts (via extracellular domain) with NTRK2 (via extracellular domain). Interacts with VPS35. Interacts (via extracellular domain) with GRIN2A (By similarity).</text>
</comment>
<comment type="subcellular location">
    <subcellularLocation>
        <location evidence="6 7">Cell membrane</location>
        <topology evidence="7">Single-pass type I membrane protein</topology>
    </subcellularLocation>
    <subcellularLocation>
        <location evidence="1">Cell projection</location>
    </subcellularLocation>
    <subcellularLocation>
        <location evidence="7">Cytoplasmic vesicle membrane</location>
        <topology evidence="7">Single-pass type I membrane protein</topology>
    </subcellularLocation>
    <subcellularLocation>
        <location evidence="1">Early endosome membrane</location>
    </subcellularLocation>
    <subcellularLocation>
        <location evidence="1">Recycling endosome membrane</location>
    </subcellularLocation>
    <subcellularLocation>
        <location evidence="1">Synapse</location>
        <location evidence="1">Synaptosome</location>
    </subcellularLocation>
    <subcellularLocation>
        <location evidence="9">Perikaryon</location>
    </subcellularLocation>
    <subcellularLocation>
        <location evidence="9">Cell projection</location>
        <location evidence="9">Dendrite</location>
    </subcellularLocation>
    <subcellularLocation>
        <location evidence="1">Cell projection</location>
        <location evidence="1">Dendritic spine</location>
    </subcellularLocation>
    <subcellularLocation>
        <location evidence="1">Postsynaptic density membrane</location>
    </subcellularLocation>
</comment>
<comment type="tissue specificity">
    <text evidence="5 9 10">Detected on neurons in the caudate region (PubMed:28469074). Detected on neurons in the hippocampus (at protein level) (PubMed:30840898). Highly expressed in brain and kidney. Detected at low levels in heart, liver, small intestine, skeletal muscle and thymus (PubMed:11499680).</text>
</comment>
<comment type="PTM">
    <text evidence="7">Proteolytic cleavage removes a propeptide, giving rise to a 122 kDa chain that includes a cytoplasmic tail. Further cleavage gives rise to a 104 kDa chain that lacks the cytoplasmic tail, and a membrane-bound 18 kDa chain. The 104 kDa chain remains bound to the 18 kDa chain.</text>
</comment>
<comment type="PTM">
    <text evidence="7">N-glycosylated.</text>
</comment>
<comment type="miscellaneous">
    <text evidence="9">Expression is decreased in the brains of Huntington disease (HD) patients after the onset of symptoms.</text>
</comment>
<comment type="similarity">
    <text evidence="11">Belongs to the VPS10-related sortilin family. SORCS subfamily.</text>
</comment>
<comment type="caution">
    <text evidence="11">The N-terminus of the protein was constructed in analogy to that of the mouse ortholog using the sequence of chromosome 4.</text>
</comment>
<protein>
    <recommendedName>
        <fullName>VPS10 domain-containing receptor SorCS2</fullName>
    </recommendedName>
    <component>
        <recommendedName>
            <fullName evidence="12">SorCS2 122 kDa chain</fullName>
        </recommendedName>
    </component>
    <component>
        <recommendedName>
            <fullName evidence="12">SorCS2 104 kDa chain</fullName>
        </recommendedName>
    </component>
    <component>
        <recommendedName>
            <fullName evidence="12">SorCS2 18 kDa chain</fullName>
        </recommendedName>
    </component>
</protein>
<evidence type="ECO:0000250" key="1">
    <source>
        <dbReference type="UniProtKB" id="Q9EPR5"/>
    </source>
</evidence>
<evidence type="ECO:0000255" key="2"/>
<evidence type="ECO:0000255" key="3">
    <source>
        <dbReference type="PROSITE-ProRule" id="PRU00151"/>
    </source>
</evidence>
<evidence type="ECO:0000256" key="4">
    <source>
        <dbReference type="SAM" id="MobiDB-lite"/>
    </source>
</evidence>
<evidence type="ECO:0000269" key="5">
    <source>
    </source>
</evidence>
<evidence type="ECO:0000269" key="6">
    <source>
    </source>
</evidence>
<evidence type="ECO:0000269" key="7">
    <source>
    </source>
</evidence>
<evidence type="ECO:0000269" key="8">
    <source>
    </source>
</evidence>
<evidence type="ECO:0000269" key="9">
    <source>
    </source>
</evidence>
<evidence type="ECO:0000269" key="10">
    <source>
    </source>
</evidence>
<evidence type="ECO:0000305" key="11"/>
<evidence type="ECO:0000305" key="12">
    <source>
    </source>
</evidence>
<evidence type="ECO:0007829" key="13">
    <source>
        <dbReference type="PDB" id="1WGO"/>
    </source>
</evidence>
<dbReference type="EMBL" id="AC004169">
    <property type="status" value="NOT_ANNOTATED_CDS"/>
    <property type="molecule type" value="Genomic_DNA"/>
</dbReference>
<dbReference type="EMBL" id="AC080003">
    <property type="status" value="NOT_ANNOTATED_CDS"/>
    <property type="molecule type" value="Genomic_DNA"/>
</dbReference>
<dbReference type="EMBL" id="AC097382">
    <property type="status" value="NOT_ANNOTATED_CDS"/>
    <property type="molecule type" value="Genomic_DNA"/>
</dbReference>
<dbReference type="EMBL" id="AC112710">
    <property type="status" value="NOT_ANNOTATED_CDS"/>
    <property type="molecule type" value="Genomic_DNA"/>
</dbReference>
<dbReference type="EMBL" id="AC116316">
    <property type="status" value="NOT_ANNOTATED_CDS"/>
    <property type="molecule type" value="Genomic_DNA"/>
</dbReference>
<dbReference type="EMBL" id="AF286190">
    <property type="protein sequence ID" value="AAL04014.1"/>
    <property type="molecule type" value="mRNA"/>
</dbReference>
<dbReference type="EMBL" id="AB037750">
    <property type="protein sequence ID" value="BAA92567.1"/>
    <property type="molecule type" value="mRNA"/>
</dbReference>
<dbReference type="CCDS" id="CCDS47008.1"/>
<dbReference type="RefSeq" id="NP_065828.2">
    <property type="nucleotide sequence ID" value="NM_020777.3"/>
</dbReference>
<dbReference type="PDB" id="1WGO">
    <property type="method" value="NMR"/>
    <property type="chains" value="A=760-869"/>
</dbReference>
<dbReference type="PDBsum" id="1WGO"/>
<dbReference type="SMR" id="Q96PQ0"/>
<dbReference type="BioGRID" id="121596">
    <property type="interactions" value="12"/>
</dbReference>
<dbReference type="FunCoup" id="Q96PQ0">
    <property type="interactions" value="393"/>
</dbReference>
<dbReference type="IntAct" id="Q96PQ0">
    <property type="interactions" value="15"/>
</dbReference>
<dbReference type="STRING" id="9606.ENSP00000422185"/>
<dbReference type="GlyConnect" id="1896">
    <property type="glycosylation" value="2 N-Linked glycans (2 sites)"/>
</dbReference>
<dbReference type="GlyCosmos" id="Q96PQ0">
    <property type="glycosylation" value="8 sites, 2 glycans"/>
</dbReference>
<dbReference type="GlyGen" id="Q96PQ0">
    <property type="glycosylation" value="11 sites, 13 N-linked glycans (3 sites), 2 O-linked glycans (3 sites)"/>
</dbReference>
<dbReference type="iPTMnet" id="Q96PQ0"/>
<dbReference type="PhosphoSitePlus" id="Q96PQ0"/>
<dbReference type="SwissPalm" id="Q96PQ0"/>
<dbReference type="BioMuta" id="SORCS2"/>
<dbReference type="DMDM" id="296453015"/>
<dbReference type="jPOST" id="Q96PQ0"/>
<dbReference type="MassIVE" id="Q96PQ0"/>
<dbReference type="PaxDb" id="9606-ENSP00000422185"/>
<dbReference type="PeptideAtlas" id="Q96PQ0"/>
<dbReference type="ProteomicsDB" id="77727"/>
<dbReference type="Antibodypedia" id="22709">
    <property type="antibodies" value="83 antibodies from 17 providers"/>
</dbReference>
<dbReference type="DNASU" id="57537"/>
<dbReference type="Ensembl" id="ENST00000507866.6">
    <property type="protein sequence ID" value="ENSP00000422185.2"/>
    <property type="gene ID" value="ENSG00000184985.17"/>
</dbReference>
<dbReference type="GeneID" id="57537"/>
<dbReference type="KEGG" id="hsa:57537"/>
<dbReference type="MANE-Select" id="ENST00000507866.6">
    <property type="protein sequence ID" value="ENSP00000422185.2"/>
    <property type="RefSeq nucleotide sequence ID" value="NM_020777.3"/>
    <property type="RefSeq protein sequence ID" value="NP_065828.2"/>
</dbReference>
<dbReference type="UCSC" id="uc003gkb.5">
    <property type="organism name" value="human"/>
</dbReference>
<dbReference type="AGR" id="HGNC:16698"/>
<dbReference type="CTD" id="57537"/>
<dbReference type="DisGeNET" id="57537"/>
<dbReference type="GeneCards" id="SORCS2"/>
<dbReference type="HGNC" id="HGNC:16698">
    <property type="gene designation" value="SORCS2"/>
</dbReference>
<dbReference type="HPA" id="ENSG00000184985">
    <property type="expression patterns" value="Tissue enhanced (brain)"/>
</dbReference>
<dbReference type="MIM" id="606284">
    <property type="type" value="gene"/>
</dbReference>
<dbReference type="neXtProt" id="NX_Q96PQ0"/>
<dbReference type="OpenTargets" id="ENSG00000184985"/>
<dbReference type="PharmGKB" id="PA134902026"/>
<dbReference type="VEuPathDB" id="HostDB:ENSG00000184985"/>
<dbReference type="eggNOG" id="KOG3511">
    <property type="taxonomic scope" value="Eukaryota"/>
</dbReference>
<dbReference type="GeneTree" id="ENSGT01030000234563"/>
<dbReference type="InParanoid" id="Q96PQ0"/>
<dbReference type="OMA" id="SWCVQGR"/>
<dbReference type="OrthoDB" id="443634at2759"/>
<dbReference type="PAN-GO" id="Q96PQ0">
    <property type="GO annotations" value="1 GO annotation based on evolutionary models"/>
</dbReference>
<dbReference type="PhylomeDB" id="Q96PQ0"/>
<dbReference type="TreeFam" id="TF324918"/>
<dbReference type="PathwayCommons" id="Q96PQ0"/>
<dbReference type="SignaLink" id="Q96PQ0"/>
<dbReference type="BioGRID-ORCS" id="57537">
    <property type="hits" value="8 hits in 1139 CRISPR screens"/>
</dbReference>
<dbReference type="ChiTaRS" id="SORCS2">
    <property type="organism name" value="human"/>
</dbReference>
<dbReference type="EvolutionaryTrace" id="Q96PQ0"/>
<dbReference type="GenomeRNAi" id="57537"/>
<dbReference type="Pharos" id="Q96PQ0">
    <property type="development level" value="Tbio"/>
</dbReference>
<dbReference type="PRO" id="PR:Q96PQ0"/>
<dbReference type="Proteomes" id="UP000005640">
    <property type="component" value="Chromosome 4"/>
</dbReference>
<dbReference type="RNAct" id="Q96PQ0">
    <property type="molecule type" value="protein"/>
</dbReference>
<dbReference type="Bgee" id="ENSG00000184985">
    <property type="expression patterns" value="Expressed in corpus callosum and 138 other cell types or tissues"/>
</dbReference>
<dbReference type="ExpressionAtlas" id="Q96PQ0">
    <property type="expression patterns" value="baseline and differential"/>
</dbReference>
<dbReference type="GO" id="GO:0005829">
    <property type="term" value="C:cytosol"/>
    <property type="evidence" value="ECO:0000314"/>
    <property type="project" value="HPA"/>
</dbReference>
<dbReference type="GO" id="GO:0043197">
    <property type="term" value="C:dendritic spine"/>
    <property type="evidence" value="ECO:0007669"/>
    <property type="project" value="UniProtKB-SubCell"/>
</dbReference>
<dbReference type="GO" id="GO:0031901">
    <property type="term" value="C:early endosome membrane"/>
    <property type="evidence" value="ECO:0007669"/>
    <property type="project" value="UniProtKB-SubCell"/>
</dbReference>
<dbReference type="GO" id="GO:0043231">
    <property type="term" value="C:intracellular membrane-bounded organelle"/>
    <property type="evidence" value="ECO:0000314"/>
    <property type="project" value="HPA"/>
</dbReference>
<dbReference type="GO" id="GO:0016020">
    <property type="term" value="C:membrane"/>
    <property type="evidence" value="ECO:0000318"/>
    <property type="project" value="GO_Central"/>
</dbReference>
<dbReference type="GO" id="GO:0043204">
    <property type="term" value="C:perikaryon"/>
    <property type="evidence" value="ECO:0007669"/>
    <property type="project" value="UniProtKB-SubCell"/>
</dbReference>
<dbReference type="GO" id="GO:0098839">
    <property type="term" value="C:postsynaptic density membrane"/>
    <property type="evidence" value="ECO:0007669"/>
    <property type="project" value="UniProtKB-SubCell"/>
</dbReference>
<dbReference type="GO" id="GO:0055038">
    <property type="term" value="C:recycling endosome membrane"/>
    <property type="evidence" value="ECO:0007669"/>
    <property type="project" value="UniProtKB-SubCell"/>
</dbReference>
<dbReference type="GO" id="GO:0008188">
    <property type="term" value="F:neuropeptide receptor activity"/>
    <property type="evidence" value="ECO:0000303"/>
    <property type="project" value="UniProtKB"/>
</dbReference>
<dbReference type="GO" id="GO:0006886">
    <property type="term" value="P:intracellular protein transport"/>
    <property type="evidence" value="ECO:0007669"/>
    <property type="project" value="Ensembl"/>
</dbReference>
<dbReference type="GO" id="GO:0060292">
    <property type="term" value="P:long-term synaptic depression"/>
    <property type="evidence" value="ECO:0007669"/>
    <property type="project" value="Ensembl"/>
</dbReference>
<dbReference type="GO" id="GO:0007218">
    <property type="term" value="P:neuropeptide signaling pathway"/>
    <property type="evidence" value="ECO:0000303"/>
    <property type="project" value="UniProtKB"/>
</dbReference>
<dbReference type="FunFam" id="2.60.40.10:FF:000083">
    <property type="entry name" value="Sortilin-related VPS10 domain containing receptor 2"/>
    <property type="match status" value="1"/>
</dbReference>
<dbReference type="FunFam" id="3.30.60.270:FF:000003">
    <property type="entry name" value="Sortilin-related VPS10 domain containing receptor 2"/>
    <property type="match status" value="1"/>
</dbReference>
<dbReference type="FunFam" id="2.10.70.80:FF:000001">
    <property type="entry name" value="Sortilin-related VPS10 domain-containing receptor 1"/>
    <property type="match status" value="1"/>
</dbReference>
<dbReference type="FunFam" id="2.130.10.10:FF:001399">
    <property type="entry name" value="Sortilin-related VPS10 domain-containing receptor 2"/>
    <property type="match status" value="1"/>
</dbReference>
<dbReference type="Gene3D" id="2.10.70.80">
    <property type="match status" value="1"/>
</dbReference>
<dbReference type="Gene3D" id="3.30.60.270">
    <property type="match status" value="1"/>
</dbReference>
<dbReference type="Gene3D" id="2.60.40.10">
    <property type="entry name" value="Immunoglobulins"/>
    <property type="match status" value="1"/>
</dbReference>
<dbReference type="Gene3D" id="2.130.10.10">
    <property type="entry name" value="YVTN repeat-like/Quinoprotein amine dehydrogenase"/>
    <property type="match status" value="1"/>
</dbReference>
<dbReference type="InterPro" id="IPR013783">
    <property type="entry name" value="Ig-like_fold"/>
</dbReference>
<dbReference type="InterPro" id="IPR022409">
    <property type="entry name" value="PKD/Chitinase_dom"/>
</dbReference>
<dbReference type="InterPro" id="IPR000601">
    <property type="entry name" value="PKD_dom"/>
</dbReference>
<dbReference type="InterPro" id="IPR035986">
    <property type="entry name" value="PKD_dom_sf"/>
</dbReference>
<dbReference type="InterPro" id="IPR031777">
    <property type="entry name" value="Sortilin_C"/>
</dbReference>
<dbReference type="InterPro" id="IPR031778">
    <property type="entry name" value="Sortilin_N"/>
</dbReference>
<dbReference type="InterPro" id="IPR006581">
    <property type="entry name" value="VPS10"/>
</dbReference>
<dbReference type="InterPro" id="IPR050310">
    <property type="entry name" value="VPS10-sortilin"/>
</dbReference>
<dbReference type="InterPro" id="IPR015943">
    <property type="entry name" value="WD40/YVTN_repeat-like_dom_sf"/>
</dbReference>
<dbReference type="PANTHER" id="PTHR12106">
    <property type="entry name" value="SORTILIN RELATED"/>
    <property type="match status" value="1"/>
</dbReference>
<dbReference type="PANTHER" id="PTHR12106:SF9">
    <property type="entry name" value="VPS10 DOMAIN-CONTAINING RECEPTOR SORCS2"/>
    <property type="match status" value="1"/>
</dbReference>
<dbReference type="Pfam" id="PF00801">
    <property type="entry name" value="PKD"/>
    <property type="match status" value="1"/>
</dbReference>
<dbReference type="Pfam" id="PF15902">
    <property type="entry name" value="Sortilin-Vps10"/>
    <property type="match status" value="1"/>
</dbReference>
<dbReference type="Pfam" id="PF15901">
    <property type="entry name" value="Sortilin_C"/>
    <property type="match status" value="1"/>
</dbReference>
<dbReference type="SMART" id="SM00089">
    <property type="entry name" value="PKD"/>
    <property type="match status" value="1"/>
</dbReference>
<dbReference type="SMART" id="SM00602">
    <property type="entry name" value="VPS10"/>
    <property type="match status" value="1"/>
</dbReference>
<dbReference type="SUPFAM" id="SSF110296">
    <property type="entry name" value="Oligoxyloglucan reducing end-specific cellobiohydrolase"/>
    <property type="match status" value="1"/>
</dbReference>
<dbReference type="SUPFAM" id="SSF49299">
    <property type="entry name" value="PKD domain"/>
    <property type="match status" value="1"/>
</dbReference>
<dbReference type="PROSITE" id="PS50093">
    <property type="entry name" value="PKD"/>
    <property type="match status" value="1"/>
</dbReference>
<sequence>MAHRGPSRASKGPGPTARAPSPGAPPPPRSPRSRPLLLLLLLLGACGAAGRSPEPGRLGPHAQLTRVPRSPPAGRAEPGGGEDRQARGTEPGAPGPSPGPAPGPGEDGAPAAGYRRWERAAPLAGVASRAQVSLISTSFVLKGDATHNQAMVHWTGENSSVILILTKYYHADMGKVLESSLWRSSDFGTSYTKLTLQPGVTTVIDNFYICPTNKRKVILVSSSLSDRDQSLFLSADEGATFQKQPIPFFVETLIFHPKEEDKVLAYTKESKLYVSSDLGKKWTLLQERVTKDHVFWSVSGVDADPDLVHVEAQDLGGDFRYVTCAIHNCSEKMLTAPFAGPIDHGSLTVQDDYIFFKATSANQTKYYVSYRRNEFVLMKLPKYALPKDLQIISTDESQVFVAVQEWYQMDTYNLYQSDPRGVRYALVLQDVRSSRQAEESVLIDILEVRGVKGVFLANQKIDGKVMTLITYNKGRDWDYLRPPSMDMNGKPTNCKPPDCHLHLHLRWADNPYVSGTVHTKDTAPGLIMGAGNLGSQLVEYKEEMYITSDCGHTWRQVFEEEHHILYLDHGGVIVAIKDTSIPLKILKFSVDEGLTWSTHNFTSTSVFVDGLLSEPGDETLVMTVFGHISFRSDWELVKVDFRPSFSRQCGEEDYSSWELSNLQGDRCIMGQQRSFRKRKSTSWCIKGRSFTSALTSRVCECRDSDFLCDYGFERSSSSESSTNKCSANFWFNPLSPPDDCALGQTYTSSLGYRKVVSNVCEGGVDMQQSQVQLQCPLTPPRGLQVSIQGEAVAVRPGEDVLFVVRQEQGDVLTTKYQVDLGDGFKAMYVNLTLTGEPIRHRYESPGIYRVSVRAENTAGHDEAVLFVQVNSPLQALYLEVVPVIGLNQEVNLTAVLLPLNPNLTVFYWWIGHSLQPLLSLDNSVTTRFSDTGDVRVTVQAACGNSVLQDSRVLRVLDQFQVMPLQFSKELDAYNPNTPEWREDVGLVVTRLLSKETSVPQELLVTVVKPGLPTLADLYVLLPPPRPTRKRSLSSDKRLAAIQQVLNAQKISFLLRGGVRVLVALRDTGTGAEQLGGGGGYWAVVVLFVIGLFAAGAFILYKFKRKRPGRTVYAQMHNEKEQEMTSPVSHSEDVQGAVQGNHSGVVLSINSREMHSYLVS</sequence>